<protein>
    <recommendedName>
        <fullName evidence="1">Succinate--CoA ligase [ADP-forming] subunit beta</fullName>
        <ecNumber evidence="1">6.2.1.5</ecNumber>
    </recommendedName>
    <alternativeName>
        <fullName evidence="1">Succinyl-CoA synthetase subunit beta</fullName>
        <shortName evidence="1">SCS-beta</shortName>
    </alternativeName>
</protein>
<organism>
    <name type="scientific">Acidiphilium cryptum (strain JF-5)</name>
    <dbReference type="NCBI Taxonomy" id="349163"/>
    <lineage>
        <taxon>Bacteria</taxon>
        <taxon>Pseudomonadati</taxon>
        <taxon>Pseudomonadota</taxon>
        <taxon>Alphaproteobacteria</taxon>
        <taxon>Acetobacterales</taxon>
        <taxon>Acidocellaceae</taxon>
        <taxon>Acidiphilium</taxon>
    </lineage>
</organism>
<sequence>MNIHEYQAKELLKSYGVAVLDGHVAWTGEEAAEAARKLPGPVYVVKSQIHAGGRGAGHFKDDPEGKGGVRLAKSPEEVAAAAEAMLGNTLVTKQTGPAGRVVRRVYVEAGCDIKRELYLSLLVDRAKSEIVIMASTEGGMEIEEVAEKHPEKILRVAVDPASGISGFHARRLGFGLGLDATQMKAFAKFVNAMYKAFVALDCAIVEINPLVVTGAGEVVALDAKVSFDDNALYRHPDLEKLRDEAEEDPKELEAAKHSLNYVALDGSIGCMVNGAGLAMATMDIIKLYGAEPANFLDVGGGATKERVTAAFKIILSDPNVEGILVNIFGGIMRCDVIAEGVVAAAREVSLSVPLVVRLEGTNVQLGKDILSKSGLPIIAADNLADAAQKIVAAVKEAA</sequence>
<feature type="chain" id="PRO_1000081988" description="Succinate--CoA ligase [ADP-forming] subunit beta">
    <location>
        <begin position="1"/>
        <end position="398"/>
    </location>
</feature>
<feature type="domain" description="ATP-grasp" evidence="1">
    <location>
        <begin position="9"/>
        <end position="253"/>
    </location>
</feature>
<feature type="binding site" evidence="1">
    <location>
        <position position="46"/>
    </location>
    <ligand>
        <name>ATP</name>
        <dbReference type="ChEBI" id="CHEBI:30616"/>
    </ligand>
</feature>
<feature type="binding site" evidence="1">
    <location>
        <begin position="53"/>
        <end position="55"/>
    </location>
    <ligand>
        <name>ATP</name>
        <dbReference type="ChEBI" id="CHEBI:30616"/>
    </ligand>
</feature>
<feature type="binding site" evidence="1">
    <location>
        <position position="108"/>
    </location>
    <ligand>
        <name>ATP</name>
        <dbReference type="ChEBI" id="CHEBI:30616"/>
    </ligand>
</feature>
<feature type="binding site" evidence="1">
    <location>
        <position position="111"/>
    </location>
    <ligand>
        <name>ATP</name>
        <dbReference type="ChEBI" id="CHEBI:30616"/>
    </ligand>
</feature>
<feature type="binding site" evidence="1">
    <location>
        <position position="116"/>
    </location>
    <ligand>
        <name>ATP</name>
        <dbReference type="ChEBI" id="CHEBI:30616"/>
    </ligand>
</feature>
<feature type="binding site" evidence="1">
    <location>
        <position position="208"/>
    </location>
    <ligand>
        <name>Mg(2+)</name>
        <dbReference type="ChEBI" id="CHEBI:18420"/>
    </ligand>
</feature>
<feature type="binding site" evidence="1">
    <location>
        <position position="222"/>
    </location>
    <ligand>
        <name>Mg(2+)</name>
        <dbReference type="ChEBI" id="CHEBI:18420"/>
    </ligand>
</feature>
<feature type="binding site" evidence="1">
    <location>
        <position position="273"/>
    </location>
    <ligand>
        <name>substrate</name>
        <note>ligand shared with subunit alpha</note>
    </ligand>
</feature>
<feature type="binding site" evidence="1">
    <location>
        <begin position="330"/>
        <end position="332"/>
    </location>
    <ligand>
        <name>substrate</name>
        <note>ligand shared with subunit alpha</note>
    </ligand>
</feature>
<keyword id="KW-0067">ATP-binding</keyword>
<keyword id="KW-0436">Ligase</keyword>
<keyword id="KW-0460">Magnesium</keyword>
<keyword id="KW-0479">Metal-binding</keyword>
<keyword id="KW-0547">Nucleotide-binding</keyword>
<keyword id="KW-1185">Reference proteome</keyword>
<keyword id="KW-0816">Tricarboxylic acid cycle</keyword>
<reference key="1">
    <citation type="submission" date="2007-05" db="EMBL/GenBank/DDBJ databases">
        <title>Complete sequence of chromosome of Acidiphilium cryptum JF-5.</title>
        <authorList>
            <consortium name="US DOE Joint Genome Institute"/>
            <person name="Copeland A."/>
            <person name="Lucas S."/>
            <person name="Lapidus A."/>
            <person name="Barry K."/>
            <person name="Detter J.C."/>
            <person name="Glavina del Rio T."/>
            <person name="Hammon N."/>
            <person name="Israni S."/>
            <person name="Dalin E."/>
            <person name="Tice H."/>
            <person name="Pitluck S."/>
            <person name="Sims D."/>
            <person name="Brettin T."/>
            <person name="Bruce D."/>
            <person name="Han C."/>
            <person name="Schmutz J."/>
            <person name="Larimer F."/>
            <person name="Land M."/>
            <person name="Hauser L."/>
            <person name="Kyrpides N."/>
            <person name="Kim E."/>
            <person name="Magnuson T."/>
            <person name="Richardson P."/>
        </authorList>
    </citation>
    <scope>NUCLEOTIDE SEQUENCE [LARGE SCALE GENOMIC DNA]</scope>
    <source>
        <strain>JF-5</strain>
    </source>
</reference>
<gene>
    <name evidence="1" type="primary">sucC</name>
    <name type="ordered locus">Acry_1625</name>
</gene>
<evidence type="ECO:0000255" key="1">
    <source>
        <dbReference type="HAMAP-Rule" id="MF_00558"/>
    </source>
</evidence>
<accession>A5FYZ9</accession>
<dbReference type="EC" id="6.2.1.5" evidence="1"/>
<dbReference type="EMBL" id="CP000697">
    <property type="protein sequence ID" value="ABQ30831.1"/>
    <property type="molecule type" value="Genomic_DNA"/>
</dbReference>
<dbReference type="RefSeq" id="WP_011942380.1">
    <property type="nucleotide sequence ID" value="NC_009484.1"/>
</dbReference>
<dbReference type="SMR" id="A5FYZ9"/>
<dbReference type="STRING" id="349163.Acry_1625"/>
<dbReference type="KEGG" id="acr:Acry_1625"/>
<dbReference type="eggNOG" id="COG0045">
    <property type="taxonomic scope" value="Bacteria"/>
</dbReference>
<dbReference type="HOGENOM" id="CLU_037430_0_2_5"/>
<dbReference type="UniPathway" id="UPA00223">
    <property type="reaction ID" value="UER00999"/>
</dbReference>
<dbReference type="Proteomes" id="UP000000245">
    <property type="component" value="Chromosome"/>
</dbReference>
<dbReference type="GO" id="GO:0005829">
    <property type="term" value="C:cytosol"/>
    <property type="evidence" value="ECO:0007669"/>
    <property type="project" value="TreeGrafter"/>
</dbReference>
<dbReference type="GO" id="GO:0042709">
    <property type="term" value="C:succinate-CoA ligase complex"/>
    <property type="evidence" value="ECO:0007669"/>
    <property type="project" value="TreeGrafter"/>
</dbReference>
<dbReference type="GO" id="GO:0005524">
    <property type="term" value="F:ATP binding"/>
    <property type="evidence" value="ECO:0007669"/>
    <property type="project" value="UniProtKB-UniRule"/>
</dbReference>
<dbReference type="GO" id="GO:0000287">
    <property type="term" value="F:magnesium ion binding"/>
    <property type="evidence" value="ECO:0007669"/>
    <property type="project" value="UniProtKB-UniRule"/>
</dbReference>
<dbReference type="GO" id="GO:0004775">
    <property type="term" value="F:succinate-CoA ligase (ADP-forming) activity"/>
    <property type="evidence" value="ECO:0007669"/>
    <property type="project" value="UniProtKB-UniRule"/>
</dbReference>
<dbReference type="GO" id="GO:0004776">
    <property type="term" value="F:succinate-CoA ligase (GDP-forming) activity"/>
    <property type="evidence" value="ECO:0007669"/>
    <property type="project" value="RHEA"/>
</dbReference>
<dbReference type="GO" id="GO:0006104">
    <property type="term" value="P:succinyl-CoA metabolic process"/>
    <property type="evidence" value="ECO:0007669"/>
    <property type="project" value="TreeGrafter"/>
</dbReference>
<dbReference type="GO" id="GO:0006099">
    <property type="term" value="P:tricarboxylic acid cycle"/>
    <property type="evidence" value="ECO:0007669"/>
    <property type="project" value="UniProtKB-UniRule"/>
</dbReference>
<dbReference type="FunFam" id="3.30.1490.20:FF:000002">
    <property type="entry name" value="Succinate--CoA ligase [ADP-forming] subunit beta"/>
    <property type="match status" value="1"/>
</dbReference>
<dbReference type="FunFam" id="3.30.470.20:FF:000002">
    <property type="entry name" value="Succinate--CoA ligase [ADP-forming] subunit beta"/>
    <property type="match status" value="1"/>
</dbReference>
<dbReference type="FunFam" id="3.40.50.261:FF:000001">
    <property type="entry name" value="Succinate--CoA ligase [ADP-forming] subunit beta"/>
    <property type="match status" value="1"/>
</dbReference>
<dbReference type="Gene3D" id="3.30.1490.20">
    <property type="entry name" value="ATP-grasp fold, A domain"/>
    <property type="match status" value="1"/>
</dbReference>
<dbReference type="Gene3D" id="3.30.470.20">
    <property type="entry name" value="ATP-grasp fold, B domain"/>
    <property type="match status" value="1"/>
</dbReference>
<dbReference type="Gene3D" id="3.40.50.261">
    <property type="entry name" value="Succinyl-CoA synthetase domains"/>
    <property type="match status" value="1"/>
</dbReference>
<dbReference type="HAMAP" id="MF_00558">
    <property type="entry name" value="Succ_CoA_beta"/>
    <property type="match status" value="1"/>
</dbReference>
<dbReference type="InterPro" id="IPR011761">
    <property type="entry name" value="ATP-grasp"/>
</dbReference>
<dbReference type="InterPro" id="IPR013650">
    <property type="entry name" value="ATP-grasp_succ-CoA_synth-type"/>
</dbReference>
<dbReference type="InterPro" id="IPR013815">
    <property type="entry name" value="ATP_grasp_subdomain_1"/>
</dbReference>
<dbReference type="InterPro" id="IPR017866">
    <property type="entry name" value="Succ-CoA_synthase_bsu_CS"/>
</dbReference>
<dbReference type="InterPro" id="IPR005811">
    <property type="entry name" value="SUCC_ACL_C"/>
</dbReference>
<dbReference type="InterPro" id="IPR005809">
    <property type="entry name" value="Succ_CoA_ligase-like_bsu"/>
</dbReference>
<dbReference type="InterPro" id="IPR016102">
    <property type="entry name" value="Succinyl-CoA_synth-like"/>
</dbReference>
<dbReference type="NCBIfam" id="NF001913">
    <property type="entry name" value="PRK00696.1"/>
    <property type="match status" value="1"/>
</dbReference>
<dbReference type="NCBIfam" id="TIGR01016">
    <property type="entry name" value="sucCoAbeta"/>
    <property type="match status" value="1"/>
</dbReference>
<dbReference type="PANTHER" id="PTHR11815:SF10">
    <property type="entry name" value="SUCCINATE--COA LIGASE [GDP-FORMING] SUBUNIT BETA, MITOCHONDRIAL"/>
    <property type="match status" value="1"/>
</dbReference>
<dbReference type="PANTHER" id="PTHR11815">
    <property type="entry name" value="SUCCINYL-COA SYNTHETASE BETA CHAIN"/>
    <property type="match status" value="1"/>
</dbReference>
<dbReference type="Pfam" id="PF08442">
    <property type="entry name" value="ATP-grasp_2"/>
    <property type="match status" value="1"/>
</dbReference>
<dbReference type="Pfam" id="PF00549">
    <property type="entry name" value="Ligase_CoA"/>
    <property type="match status" value="1"/>
</dbReference>
<dbReference type="PIRSF" id="PIRSF001554">
    <property type="entry name" value="SucCS_beta"/>
    <property type="match status" value="1"/>
</dbReference>
<dbReference type="SUPFAM" id="SSF56059">
    <property type="entry name" value="Glutathione synthetase ATP-binding domain-like"/>
    <property type="match status" value="1"/>
</dbReference>
<dbReference type="SUPFAM" id="SSF52210">
    <property type="entry name" value="Succinyl-CoA synthetase domains"/>
    <property type="match status" value="1"/>
</dbReference>
<dbReference type="PROSITE" id="PS50975">
    <property type="entry name" value="ATP_GRASP"/>
    <property type="match status" value="1"/>
</dbReference>
<dbReference type="PROSITE" id="PS01217">
    <property type="entry name" value="SUCCINYL_COA_LIG_3"/>
    <property type="match status" value="1"/>
</dbReference>
<name>SUCC_ACICJ</name>
<comment type="function">
    <text evidence="1">Succinyl-CoA synthetase functions in the citric acid cycle (TCA), coupling the hydrolysis of succinyl-CoA to the synthesis of either ATP or GTP and thus represents the only step of substrate-level phosphorylation in the TCA. The beta subunit provides nucleotide specificity of the enzyme and binds the substrate succinate, while the binding sites for coenzyme A and phosphate are found in the alpha subunit.</text>
</comment>
<comment type="catalytic activity">
    <reaction evidence="1">
        <text>succinate + ATP + CoA = succinyl-CoA + ADP + phosphate</text>
        <dbReference type="Rhea" id="RHEA:17661"/>
        <dbReference type="ChEBI" id="CHEBI:30031"/>
        <dbReference type="ChEBI" id="CHEBI:30616"/>
        <dbReference type="ChEBI" id="CHEBI:43474"/>
        <dbReference type="ChEBI" id="CHEBI:57287"/>
        <dbReference type="ChEBI" id="CHEBI:57292"/>
        <dbReference type="ChEBI" id="CHEBI:456216"/>
        <dbReference type="EC" id="6.2.1.5"/>
    </reaction>
    <physiologicalReaction direction="right-to-left" evidence="1">
        <dbReference type="Rhea" id="RHEA:17663"/>
    </physiologicalReaction>
</comment>
<comment type="catalytic activity">
    <reaction evidence="1">
        <text>GTP + succinate + CoA = succinyl-CoA + GDP + phosphate</text>
        <dbReference type="Rhea" id="RHEA:22120"/>
        <dbReference type="ChEBI" id="CHEBI:30031"/>
        <dbReference type="ChEBI" id="CHEBI:37565"/>
        <dbReference type="ChEBI" id="CHEBI:43474"/>
        <dbReference type="ChEBI" id="CHEBI:57287"/>
        <dbReference type="ChEBI" id="CHEBI:57292"/>
        <dbReference type="ChEBI" id="CHEBI:58189"/>
    </reaction>
    <physiologicalReaction direction="right-to-left" evidence="1">
        <dbReference type="Rhea" id="RHEA:22122"/>
    </physiologicalReaction>
</comment>
<comment type="cofactor">
    <cofactor evidence="1">
        <name>Mg(2+)</name>
        <dbReference type="ChEBI" id="CHEBI:18420"/>
    </cofactor>
    <text evidence="1">Binds 1 Mg(2+) ion per subunit.</text>
</comment>
<comment type="pathway">
    <text evidence="1">Carbohydrate metabolism; tricarboxylic acid cycle; succinate from succinyl-CoA (ligase route): step 1/1.</text>
</comment>
<comment type="subunit">
    <text evidence="1">Heterotetramer of two alpha and two beta subunits.</text>
</comment>
<comment type="similarity">
    <text evidence="1">Belongs to the succinate/malate CoA ligase beta subunit family.</text>
</comment>
<proteinExistence type="inferred from homology"/>